<gene>
    <name type="primary">CHS1</name>
</gene>
<name>CHS1_CAMSI</name>
<comment type="function">
    <text>The primary product of this enzyme is 4,2',4',6'-tetrahydroxychalcone (also termed naringenin-chalcone or chalcone) which can under specific conditions spontaneously isomerize into naringenin.</text>
</comment>
<comment type="catalytic activity">
    <reaction evidence="1">
        <text>(E)-4-coumaroyl-CoA + 3 malonyl-CoA + 3 H(+) = 2',4,4',6'-tetrahydroxychalcone + 3 CO2 + 4 CoA</text>
        <dbReference type="Rhea" id="RHEA:11128"/>
        <dbReference type="ChEBI" id="CHEBI:15378"/>
        <dbReference type="ChEBI" id="CHEBI:15413"/>
        <dbReference type="ChEBI" id="CHEBI:16526"/>
        <dbReference type="ChEBI" id="CHEBI:57287"/>
        <dbReference type="ChEBI" id="CHEBI:57384"/>
        <dbReference type="ChEBI" id="CHEBI:85008"/>
        <dbReference type="EC" id="2.3.1.74"/>
    </reaction>
</comment>
<comment type="pathway">
    <text>Secondary metabolite biosynthesis; flavonoid biosynthesis.</text>
</comment>
<comment type="similarity">
    <text evidence="2">Belongs to the thiolase-like superfamily. Chalcone/stilbene synthases family.</text>
</comment>
<evidence type="ECO:0000255" key="1">
    <source>
        <dbReference type="PROSITE-ProRule" id="PRU10023"/>
    </source>
</evidence>
<evidence type="ECO:0000305" key="2"/>
<feature type="chain" id="PRO_0000215960" description="Chalcone synthase 1">
    <location>
        <begin position="1"/>
        <end position="389"/>
    </location>
</feature>
<feature type="active site" evidence="1">
    <location>
        <position position="164"/>
    </location>
</feature>
<reference key="1">
    <citation type="journal article" date="1994" name="Plant Cell Physiol.">
        <title>Chalcone synthase from Camellia sinensis: isolation of the cDNAs and the organ-specific and sugar-responsive expression of the genes.</title>
        <authorList>
            <person name="Takeuchi A."/>
            <person name="Matsumoto S."/>
            <person name="Hayatsu M."/>
        </authorList>
    </citation>
    <scope>NUCLEOTIDE SEQUENCE [MRNA]</scope>
    <source>
        <strain>cv. Yabukita</strain>
        <tissue>Leaf</tissue>
    </source>
</reference>
<keyword id="KW-0012">Acyltransferase</keyword>
<keyword id="KW-0284">Flavonoid biosynthesis</keyword>
<keyword id="KW-0808">Transferase</keyword>
<organism>
    <name type="scientific">Camellia sinensis</name>
    <name type="common">Tea plant</name>
    <name type="synonym">Thea sinensis</name>
    <dbReference type="NCBI Taxonomy" id="4442"/>
    <lineage>
        <taxon>Eukaryota</taxon>
        <taxon>Viridiplantae</taxon>
        <taxon>Streptophyta</taxon>
        <taxon>Embryophyta</taxon>
        <taxon>Tracheophyta</taxon>
        <taxon>Spermatophyta</taxon>
        <taxon>Magnoliopsida</taxon>
        <taxon>eudicotyledons</taxon>
        <taxon>Gunneridae</taxon>
        <taxon>Pentapetalae</taxon>
        <taxon>asterids</taxon>
        <taxon>Ericales</taxon>
        <taxon>Theaceae</taxon>
        <taxon>Camellia</taxon>
    </lineage>
</organism>
<accession>P48386</accession>
<proteinExistence type="evidence at transcript level"/>
<protein>
    <recommendedName>
        <fullName>Chalcone synthase 1</fullName>
        <ecNumber>2.3.1.74</ecNumber>
    </recommendedName>
    <alternativeName>
        <fullName>Naringenin-chalcone synthase 1</fullName>
    </alternativeName>
</protein>
<dbReference type="EC" id="2.3.1.74"/>
<dbReference type="EMBL" id="D26593">
    <property type="protein sequence ID" value="BAA05640.1"/>
    <property type="molecule type" value="mRNA"/>
</dbReference>
<dbReference type="SMR" id="P48386"/>
<dbReference type="UniPathway" id="UPA00154"/>
<dbReference type="GO" id="GO:0016210">
    <property type="term" value="F:naringenin-chalcone synthase activity"/>
    <property type="evidence" value="ECO:0007669"/>
    <property type="project" value="UniProtKB-EC"/>
</dbReference>
<dbReference type="GO" id="GO:0009813">
    <property type="term" value="P:flavonoid biosynthetic process"/>
    <property type="evidence" value="ECO:0007669"/>
    <property type="project" value="UniProtKB-UniPathway"/>
</dbReference>
<dbReference type="GO" id="GO:0030639">
    <property type="term" value="P:polyketide biosynthetic process"/>
    <property type="evidence" value="ECO:0007669"/>
    <property type="project" value="TreeGrafter"/>
</dbReference>
<dbReference type="CDD" id="cd00831">
    <property type="entry name" value="CHS_like"/>
    <property type="match status" value="1"/>
</dbReference>
<dbReference type="FunFam" id="3.40.47.10:FF:000014">
    <property type="entry name" value="Chalcone synthase 1"/>
    <property type="match status" value="1"/>
</dbReference>
<dbReference type="FunFam" id="3.40.47.10:FF:000025">
    <property type="entry name" value="Chalcone synthase 2"/>
    <property type="match status" value="1"/>
</dbReference>
<dbReference type="Gene3D" id="3.40.47.10">
    <property type="match status" value="2"/>
</dbReference>
<dbReference type="InterPro" id="IPR012328">
    <property type="entry name" value="Chalcone/stilbene_synt_C"/>
</dbReference>
<dbReference type="InterPro" id="IPR001099">
    <property type="entry name" value="Chalcone/stilbene_synt_N"/>
</dbReference>
<dbReference type="InterPro" id="IPR018088">
    <property type="entry name" value="Chalcone/stilbene_synthase_AS"/>
</dbReference>
<dbReference type="InterPro" id="IPR011141">
    <property type="entry name" value="Polyketide_synthase_type-III"/>
</dbReference>
<dbReference type="InterPro" id="IPR016039">
    <property type="entry name" value="Thiolase-like"/>
</dbReference>
<dbReference type="PANTHER" id="PTHR11877:SF80">
    <property type="entry name" value="CHALCONE SYNTHASE 1"/>
    <property type="match status" value="1"/>
</dbReference>
<dbReference type="PANTHER" id="PTHR11877">
    <property type="entry name" value="HYDROXYMETHYLGLUTARYL-COA SYNTHASE"/>
    <property type="match status" value="1"/>
</dbReference>
<dbReference type="Pfam" id="PF02797">
    <property type="entry name" value="Chal_sti_synt_C"/>
    <property type="match status" value="1"/>
</dbReference>
<dbReference type="Pfam" id="PF00195">
    <property type="entry name" value="Chal_sti_synt_N"/>
    <property type="match status" value="1"/>
</dbReference>
<dbReference type="PIRSF" id="PIRSF000451">
    <property type="entry name" value="PKS_III"/>
    <property type="match status" value="1"/>
</dbReference>
<dbReference type="SUPFAM" id="SSF53901">
    <property type="entry name" value="Thiolase-like"/>
    <property type="match status" value="2"/>
</dbReference>
<dbReference type="PROSITE" id="PS00441">
    <property type="entry name" value="CHALCONE_SYNTH"/>
    <property type="match status" value="1"/>
</dbReference>
<sequence length="389" mass="42570">MVTVEDIRRAQRAEGPATVMAIGTATPPNCVDQSTYPDYYFRITNSEHKAELKEKFKRMCDKSMIKKRYMYLTEEILKENPQVCEYMAPSLDARQDMVVVEVPKLGKEAATKAIKEWGQPKSKITHLVFCTTSGVDMPGADYQLTKLLGLRPSVKRLMMYQQGCFAGGTVLRLAKDLAENNKGARVLVVCSEITAVTFRGPSDTHLDSLVGQALFGDGAAAIIVGSDPIPEVEKPLFELVSAAQTILPDSDGAIDGHLREVGLTFHLLKDVPGLISKNIEKSLAEAFQPLGISDWNSLFWIAHPGGPAILDQVELKLGLKEEKLRATRHVLSEYGNMSSACVLFILDEMRKKSAADGLKTTGEGLEWGVLFGFGPGLTVETVVLHSLST</sequence>